<dbReference type="EC" id="2.7.11.1"/>
<dbReference type="EMBL" id="AF387809">
    <property type="protein sequence ID" value="AAK97440.1"/>
    <property type="molecule type" value="mRNA"/>
</dbReference>
<dbReference type="EMBL" id="BC020189">
    <property type="protein sequence ID" value="AAH20189.1"/>
    <property type="molecule type" value="mRNA"/>
</dbReference>
<dbReference type="EMBL" id="BC094658">
    <property type="protein sequence ID" value="AAH94658.1"/>
    <property type="molecule type" value="mRNA"/>
</dbReference>
<dbReference type="CCDS" id="CCDS23644.1"/>
<dbReference type="RefSeq" id="NP_001158044.1">
    <property type="nucleotide sequence ID" value="NM_001164572.1"/>
</dbReference>
<dbReference type="RefSeq" id="NP_001344703.1">
    <property type="nucleotide sequence ID" value="NM_001357774.1"/>
</dbReference>
<dbReference type="RefSeq" id="NP_001344704.1">
    <property type="nucleotide sequence ID" value="NM_001357775.1"/>
</dbReference>
<dbReference type="RefSeq" id="NP_001344705.1">
    <property type="nucleotide sequence ID" value="NM_001357776.1"/>
</dbReference>
<dbReference type="RefSeq" id="NP_598502.2">
    <property type="nucleotide sequence ID" value="NM_133741.2"/>
</dbReference>
<dbReference type="RefSeq" id="XP_006512061.1">
    <property type="nucleotide sequence ID" value="XM_006511998.3"/>
</dbReference>
<dbReference type="RefSeq" id="XP_006512062.1">
    <property type="nucleotide sequence ID" value="XM_006511999.5"/>
</dbReference>
<dbReference type="RefSeq" id="XP_006512063.1">
    <property type="nucleotide sequence ID" value="XM_006512000.5"/>
</dbReference>
<dbReference type="RefSeq" id="XP_006512065.1">
    <property type="nucleotide sequence ID" value="XM_006512002.4"/>
</dbReference>
<dbReference type="RefSeq" id="XP_006512066.1">
    <property type="nucleotide sequence ID" value="XM_006512003.3"/>
</dbReference>
<dbReference type="RefSeq" id="XP_036010647.1">
    <property type="nucleotide sequence ID" value="XM_036154754.1"/>
</dbReference>
<dbReference type="RefSeq" id="XP_036010648.1">
    <property type="nucleotide sequence ID" value="XM_036154755.1"/>
</dbReference>
<dbReference type="RefSeq" id="XP_036010649.1">
    <property type="nucleotide sequence ID" value="XM_036154756.1"/>
</dbReference>
<dbReference type="SMR" id="Q8VDU5"/>
<dbReference type="BioGRID" id="203371">
    <property type="interactions" value="3"/>
</dbReference>
<dbReference type="FunCoup" id="Q8VDU5">
    <property type="interactions" value="3644"/>
</dbReference>
<dbReference type="IntAct" id="Q8VDU5">
    <property type="interactions" value="1"/>
</dbReference>
<dbReference type="MINT" id="Q8VDU5"/>
<dbReference type="STRING" id="10090.ENSMUSP00000114132"/>
<dbReference type="GlyGen" id="Q8VDU5">
    <property type="glycosylation" value="2 sites, 1 O-linked glycan (1 site)"/>
</dbReference>
<dbReference type="iPTMnet" id="Q8VDU5"/>
<dbReference type="PhosphoSitePlus" id="Q8VDU5"/>
<dbReference type="SwissPalm" id="Q8VDU5"/>
<dbReference type="jPOST" id="Q8VDU5"/>
<dbReference type="PaxDb" id="10090-ENSMUSP00000112919"/>
<dbReference type="PeptideAtlas" id="Q8VDU5"/>
<dbReference type="ProteomicsDB" id="261092"/>
<dbReference type="Pumba" id="Q8VDU5"/>
<dbReference type="Antibodypedia" id="29346">
    <property type="antibodies" value="148 antibodies from 29 providers"/>
</dbReference>
<dbReference type="DNASU" id="20623"/>
<dbReference type="Ensembl" id="ENSMUST00000118886.9">
    <property type="protein sequence ID" value="ENSMUSP00000114132.2"/>
    <property type="gene ID" value="ENSMUSG00000038145.18"/>
</dbReference>
<dbReference type="Ensembl" id="ENSMUST00000120173.9">
    <property type="protein sequence ID" value="ENSMUSP00000112919.2"/>
    <property type="gene ID" value="ENSMUSG00000038145.18"/>
</dbReference>
<dbReference type="GeneID" id="20623"/>
<dbReference type="KEGG" id="mmu:20623"/>
<dbReference type="UCSC" id="uc009sen.2">
    <property type="organism name" value="mouse"/>
</dbReference>
<dbReference type="AGR" id="MGI:108104"/>
<dbReference type="CTD" id="54861"/>
<dbReference type="MGI" id="MGI:108104">
    <property type="gene designation" value="Snrk"/>
</dbReference>
<dbReference type="VEuPathDB" id="HostDB:ENSMUSG00000038145"/>
<dbReference type="eggNOG" id="KOG4717">
    <property type="taxonomic scope" value="Eukaryota"/>
</dbReference>
<dbReference type="GeneTree" id="ENSGT00940000155365"/>
<dbReference type="HOGENOM" id="CLU_007233_3_0_1"/>
<dbReference type="InParanoid" id="Q8VDU5"/>
<dbReference type="OMA" id="EETTGAC"/>
<dbReference type="OrthoDB" id="942095at2759"/>
<dbReference type="PhylomeDB" id="Q8VDU5"/>
<dbReference type="TreeFam" id="TF351991"/>
<dbReference type="BioGRID-ORCS" id="20623">
    <property type="hits" value="4 hits in 80 CRISPR screens"/>
</dbReference>
<dbReference type="ChiTaRS" id="Snrk">
    <property type="organism name" value="mouse"/>
</dbReference>
<dbReference type="PRO" id="PR:Q8VDU5"/>
<dbReference type="Proteomes" id="UP000000589">
    <property type="component" value="Chromosome 9"/>
</dbReference>
<dbReference type="RNAct" id="Q8VDU5">
    <property type="molecule type" value="protein"/>
</dbReference>
<dbReference type="Bgee" id="ENSMUSG00000038145">
    <property type="expression patterns" value="Expressed in cerebellar vermis and 263 other cell types or tissues"/>
</dbReference>
<dbReference type="ExpressionAtlas" id="Q8VDU5">
    <property type="expression patterns" value="baseline and differential"/>
</dbReference>
<dbReference type="GO" id="GO:0005634">
    <property type="term" value="C:nucleus"/>
    <property type="evidence" value="ECO:0000250"/>
    <property type="project" value="UniProtKB"/>
</dbReference>
<dbReference type="GO" id="GO:0005524">
    <property type="term" value="F:ATP binding"/>
    <property type="evidence" value="ECO:0000250"/>
    <property type="project" value="UniProtKB"/>
</dbReference>
<dbReference type="GO" id="GO:0000287">
    <property type="term" value="F:magnesium ion binding"/>
    <property type="evidence" value="ECO:0000250"/>
    <property type="project" value="UniProtKB"/>
</dbReference>
<dbReference type="GO" id="GO:0106310">
    <property type="term" value="F:protein serine kinase activity"/>
    <property type="evidence" value="ECO:0007669"/>
    <property type="project" value="RHEA"/>
</dbReference>
<dbReference type="GO" id="GO:0004674">
    <property type="term" value="F:protein serine/threonine kinase activity"/>
    <property type="evidence" value="ECO:0000250"/>
    <property type="project" value="UniProtKB"/>
</dbReference>
<dbReference type="GO" id="GO:0006468">
    <property type="term" value="P:protein phosphorylation"/>
    <property type="evidence" value="ECO:0000250"/>
    <property type="project" value="UniProtKB"/>
</dbReference>
<dbReference type="CDD" id="cd14074">
    <property type="entry name" value="STKc_SNRK"/>
    <property type="match status" value="1"/>
</dbReference>
<dbReference type="CDD" id="cd14339">
    <property type="entry name" value="UBA_SNRK"/>
    <property type="match status" value="1"/>
</dbReference>
<dbReference type="FunFam" id="3.30.200.20:FF:000003">
    <property type="entry name" value="Non-specific serine/threonine protein kinase"/>
    <property type="match status" value="1"/>
</dbReference>
<dbReference type="FunFam" id="1.10.510.10:FF:000166">
    <property type="entry name" value="SNF-related serine/threonine-protein kinase"/>
    <property type="match status" value="1"/>
</dbReference>
<dbReference type="Gene3D" id="1.10.510.10">
    <property type="entry name" value="Transferase(Phosphotransferase) domain 1"/>
    <property type="match status" value="1"/>
</dbReference>
<dbReference type="InterPro" id="IPR011009">
    <property type="entry name" value="Kinase-like_dom_sf"/>
</dbReference>
<dbReference type="InterPro" id="IPR000719">
    <property type="entry name" value="Prot_kinase_dom"/>
</dbReference>
<dbReference type="InterPro" id="IPR017441">
    <property type="entry name" value="Protein_kinase_ATP_BS"/>
</dbReference>
<dbReference type="InterPro" id="IPR008271">
    <property type="entry name" value="Ser/Thr_kinase_AS"/>
</dbReference>
<dbReference type="InterPro" id="IPR015940">
    <property type="entry name" value="UBA"/>
</dbReference>
<dbReference type="PANTHER" id="PTHR24346">
    <property type="entry name" value="MAP/MICROTUBULE AFFINITY-REGULATING KINASE"/>
    <property type="match status" value="1"/>
</dbReference>
<dbReference type="PANTHER" id="PTHR24346:SF90">
    <property type="entry name" value="SNF RELATED KINASE"/>
    <property type="match status" value="1"/>
</dbReference>
<dbReference type="Pfam" id="PF00069">
    <property type="entry name" value="Pkinase"/>
    <property type="match status" value="1"/>
</dbReference>
<dbReference type="SMART" id="SM00220">
    <property type="entry name" value="S_TKc"/>
    <property type="match status" value="1"/>
</dbReference>
<dbReference type="SUPFAM" id="SSF56112">
    <property type="entry name" value="Protein kinase-like (PK-like)"/>
    <property type="match status" value="1"/>
</dbReference>
<dbReference type="PROSITE" id="PS00107">
    <property type="entry name" value="PROTEIN_KINASE_ATP"/>
    <property type="match status" value="1"/>
</dbReference>
<dbReference type="PROSITE" id="PS50011">
    <property type="entry name" value="PROTEIN_KINASE_DOM"/>
    <property type="match status" value="1"/>
</dbReference>
<dbReference type="PROSITE" id="PS00108">
    <property type="entry name" value="PROTEIN_KINASE_ST"/>
    <property type="match status" value="1"/>
</dbReference>
<dbReference type="PROSITE" id="PS50030">
    <property type="entry name" value="UBA"/>
    <property type="match status" value="1"/>
</dbReference>
<organism>
    <name type="scientific">Mus musculus</name>
    <name type="common">Mouse</name>
    <dbReference type="NCBI Taxonomy" id="10090"/>
    <lineage>
        <taxon>Eukaryota</taxon>
        <taxon>Metazoa</taxon>
        <taxon>Chordata</taxon>
        <taxon>Craniata</taxon>
        <taxon>Vertebrata</taxon>
        <taxon>Euteleostomi</taxon>
        <taxon>Mammalia</taxon>
        <taxon>Eutheria</taxon>
        <taxon>Euarchontoglires</taxon>
        <taxon>Glires</taxon>
        <taxon>Rodentia</taxon>
        <taxon>Myomorpha</taxon>
        <taxon>Muroidea</taxon>
        <taxon>Muridae</taxon>
        <taxon>Murinae</taxon>
        <taxon>Mus</taxon>
        <taxon>Mus</taxon>
    </lineage>
</organism>
<keyword id="KW-0067">ATP-binding</keyword>
<keyword id="KW-0418">Kinase</keyword>
<keyword id="KW-0460">Magnesium</keyword>
<keyword id="KW-0479">Metal-binding</keyword>
<keyword id="KW-0488">Methylation</keyword>
<keyword id="KW-0547">Nucleotide-binding</keyword>
<keyword id="KW-0539">Nucleus</keyword>
<keyword id="KW-0597">Phosphoprotein</keyword>
<keyword id="KW-1185">Reference proteome</keyword>
<keyword id="KW-0723">Serine/threonine-protein kinase</keyword>
<keyword id="KW-0808">Transferase</keyword>
<evidence type="ECO:0000250" key="1"/>
<evidence type="ECO:0000250" key="2">
    <source>
        <dbReference type="UniProtKB" id="P57059"/>
    </source>
</evidence>
<evidence type="ECO:0000250" key="3">
    <source>
        <dbReference type="UniProtKB" id="Q63553"/>
    </source>
</evidence>
<evidence type="ECO:0000250" key="4">
    <source>
        <dbReference type="UniProtKB" id="Q9NRH2"/>
    </source>
</evidence>
<evidence type="ECO:0000255" key="5">
    <source>
        <dbReference type="PROSITE-ProRule" id="PRU00159"/>
    </source>
</evidence>
<evidence type="ECO:0000255" key="6">
    <source>
        <dbReference type="PROSITE-ProRule" id="PRU00212"/>
    </source>
</evidence>
<evidence type="ECO:0000255" key="7">
    <source>
        <dbReference type="PROSITE-ProRule" id="PRU10027"/>
    </source>
</evidence>
<evidence type="ECO:0000256" key="8">
    <source>
        <dbReference type="SAM" id="MobiDB-lite"/>
    </source>
</evidence>
<evidence type="ECO:0000269" key="9">
    <source>
    </source>
</evidence>
<evidence type="ECO:0000305" key="10"/>
<evidence type="ECO:0000312" key="11">
    <source>
        <dbReference type="EMBL" id="AAH20189.1"/>
    </source>
</evidence>
<evidence type="ECO:0000312" key="12">
    <source>
        <dbReference type="EMBL" id="AAH94658.1"/>
    </source>
</evidence>
<evidence type="ECO:0000312" key="13">
    <source>
        <dbReference type="EMBL" id="AAK97440.1"/>
    </source>
</evidence>
<evidence type="ECO:0000312" key="14">
    <source>
        <dbReference type="MGI" id="MGI:108104"/>
    </source>
</evidence>
<evidence type="ECO:0007744" key="15">
    <source>
    </source>
</evidence>
<evidence type="ECO:0007744" key="16">
    <source>
    </source>
</evidence>
<protein>
    <recommendedName>
        <fullName>SNF-related serine/threonine-protein kinase</fullName>
        <ecNumber>2.7.11.1</ecNumber>
    </recommendedName>
    <alternativeName>
        <fullName>SNF1-related kinase</fullName>
    </alternativeName>
</protein>
<accession>Q8VDU5</accession>
<accession>Q91WX6</accession>
<proteinExistence type="evidence at protein level"/>
<gene>
    <name evidence="14" type="primary">Snrk</name>
</gene>
<sequence length="748" mass="81913">MAGFKRGYDGKIAGLYDLDKTLGRGHFAVVKLARHVFTGEKVAVKVIDKTKLDTLATGHLFQEVRCMKLVQHPNIVRLYEVIDTQTKLYLILELGDGGDMFDYIMKHEEGLNEDLAKKYFAQIVHAISYCHKLHVVHRDLKPENVVFFEKQGLVKLTDFGFSNKFQPGKKLTTSCGSLAYSAPEILLGDEYDAPAVDIWSLGVILFMLVCGQPPFQEANDSETLTMIMDCKYTVPPRVSAGCRDLITRMLQRDPKRRASLEEIESHPWLQGVDPSPATKYNIPLVSYKNLSEEEHNSIIQRMVLGDIADRDAIVEALETNRYNHITATYFLLAERILREKQEKEIQTRSASPSNIKAQFRQSWPTKIDVPQDLEDDLTATPLSHATVPQSPARAGDNVLNGHRSKGLCDPAKKDELPELAGPALSTVPPASMKPAASGRKCLFRVEEDEEEDEEDKKPVSLSTQVVLRRKPSVTNRLTSRKSAPVLNQIFEEGESDDEFDMDENLPPKLSRLKMNIASPGTVHKRYHRRKSQGRGSSCSSSETSDDDSESRRRLDKDSGFAYSWHRRDSSEGPPGSEGDGGGQSKPSSGGGVDKASPGEQGTGGGSQGGSGGTPSGTAGSSRRCAGPDSSSPSPASASAAPRGAELVQSLKLVSLCLGSQLHGAKYILDPQKALFSSVKVQEKSTWKMCISAPGPSPSADLDPVRTKKLRNNALQLPLCEKTISVNIQRSRKEGLLCASSPASCCHVI</sequence>
<reference evidence="10 13" key="1">
    <citation type="journal article" date="2002" name="Gene">
        <title>Cloning and characterization of human and mouse SNRK sucrose non-fermenting protein (SNF-1)-related kinases.</title>
        <authorList>
            <person name="Kertesz N."/>
            <person name="Samson J."/>
            <person name="Debacker C."/>
            <person name="Wu H."/>
            <person name="Labastie M.-C."/>
        </authorList>
    </citation>
    <scope>NUCLEOTIDE SEQUENCE [MRNA]</scope>
    <scope>TISSUE SPECIFICITY</scope>
    <scope>DEVELOPMENTAL STAGE</scope>
    <source>
        <strain evidence="13">BALB/cJ</strain>
        <tissue evidence="13">Yolk sac</tissue>
    </source>
</reference>
<reference evidence="12" key="2">
    <citation type="journal article" date="2004" name="Genome Res.">
        <title>The status, quality, and expansion of the NIH full-length cDNA project: the Mammalian Gene Collection (MGC).</title>
        <authorList>
            <consortium name="The MGC Project Team"/>
        </authorList>
    </citation>
    <scope>NUCLEOTIDE SEQUENCE [LARGE SCALE MRNA]</scope>
    <source>
        <strain evidence="12">C57BL/6J</strain>
        <strain evidence="11">FVB/N</strain>
        <tissue evidence="12">Brain</tissue>
        <tissue evidence="11">Mammary gland</tissue>
    </source>
</reference>
<reference key="3">
    <citation type="journal article" date="2010" name="Cell">
        <title>A tissue-specific atlas of mouse protein phosphorylation and expression.</title>
        <authorList>
            <person name="Huttlin E.L."/>
            <person name="Jedrychowski M.P."/>
            <person name="Elias J.E."/>
            <person name="Goswami T."/>
            <person name="Rad R."/>
            <person name="Beausoleil S.A."/>
            <person name="Villen J."/>
            <person name="Haas W."/>
            <person name="Sowa M.E."/>
            <person name="Gygi S.P."/>
        </authorList>
    </citation>
    <scope>PHOSPHORYLATION [LARGE SCALE ANALYSIS] AT SER-162; SER-362 AND SER-482</scope>
    <scope>IDENTIFICATION BY MASS SPECTROMETRY [LARGE SCALE ANALYSIS]</scope>
    <source>
        <tissue>Brain</tissue>
        <tissue>Brown adipose tissue</tissue>
        <tissue>Kidney</tissue>
        <tissue>Lung</tissue>
    </source>
</reference>
<reference key="4">
    <citation type="journal article" date="2014" name="Mol. Cell. Proteomics">
        <title>Immunoaffinity enrichment and mass spectrometry analysis of protein methylation.</title>
        <authorList>
            <person name="Guo A."/>
            <person name="Gu H."/>
            <person name="Zhou J."/>
            <person name="Mulhern D."/>
            <person name="Wang Y."/>
            <person name="Lee K.A."/>
            <person name="Yang V."/>
            <person name="Aguiar M."/>
            <person name="Kornhauser J."/>
            <person name="Jia X."/>
            <person name="Ren J."/>
            <person name="Beausoleil S.A."/>
            <person name="Silva J.C."/>
            <person name="Vemulapalli V."/>
            <person name="Bedford M.T."/>
            <person name="Comb M.J."/>
        </authorList>
    </citation>
    <scope>METHYLATION [LARGE SCALE ANALYSIS] AT ARG-534</scope>
    <scope>IDENTIFICATION BY MASS SPECTROMETRY [LARGE SCALE ANALYSIS]</scope>
    <source>
        <tissue>Brain</tissue>
    </source>
</reference>
<feature type="chain" id="PRO_0000225606" description="SNF-related serine/threonine-protein kinase" evidence="10">
    <location>
        <begin position="1"/>
        <end position="748"/>
    </location>
</feature>
<feature type="domain" description="Protein kinase" evidence="5">
    <location>
        <begin position="16"/>
        <end position="269"/>
    </location>
</feature>
<feature type="domain" description="UBA" evidence="6">
    <location>
        <begin position="291"/>
        <end position="334"/>
    </location>
</feature>
<feature type="region of interest" description="Disordered" evidence="8">
    <location>
        <begin position="383"/>
        <end position="415"/>
    </location>
</feature>
<feature type="region of interest" description="Disordered" evidence="8">
    <location>
        <begin position="491"/>
        <end position="640"/>
    </location>
</feature>
<feature type="compositionally biased region" description="Acidic residues" evidence="8">
    <location>
        <begin position="491"/>
        <end position="503"/>
    </location>
</feature>
<feature type="compositionally biased region" description="Basic residues" evidence="8">
    <location>
        <begin position="522"/>
        <end position="532"/>
    </location>
</feature>
<feature type="compositionally biased region" description="Low complexity" evidence="8">
    <location>
        <begin position="533"/>
        <end position="542"/>
    </location>
</feature>
<feature type="compositionally biased region" description="Basic and acidic residues" evidence="8">
    <location>
        <begin position="549"/>
        <end position="558"/>
    </location>
</feature>
<feature type="compositionally biased region" description="Gly residues" evidence="8">
    <location>
        <begin position="575"/>
        <end position="592"/>
    </location>
</feature>
<feature type="compositionally biased region" description="Gly residues" evidence="8">
    <location>
        <begin position="600"/>
        <end position="614"/>
    </location>
</feature>
<feature type="compositionally biased region" description="Low complexity" evidence="8">
    <location>
        <begin position="629"/>
        <end position="640"/>
    </location>
</feature>
<feature type="active site" description="Proton acceptor" evidence="2 5 7">
    <location>
        <position position="139"/>
    </location>
</feature>
<feature type="binding site" evidence="2 5">
    <location>
        <begin position="22"/>
        <end position="30"/>
    </location>
    <ligand>
        <name>ATP</name>
        <dbReference type="ChEBI" id="CHEBI:30616"/>
    </ligand>
</feature>
<feature type="binding site" evidence="2 5">
    <location>
        <position position="45"/>
    </location>
    <ligand>
        <name>ATP</name>
        <dbReference type="ChEBI" id="CHEBI:30616"/>
    </ligand>
</feature>
<feature type="modified residue" description="Phosphoserine" evidence="15">
    <location>
        <position position="162"/>
    </location>
</feature>
<feature type="modified residue" description="Phosphothreonine; by LKB1" evidence="4">
    <location>
        <position position="173"/>
    </location>
</feature>
<feature type="modified residue" description="Phosphoserine" evidence="15">
    <location>
        <position position="362"/>
    </location>
</feature>
<feature type="modified residue" description="Phosphoserine" evidence="4">
    <location>
        <position position="390"/>
    </location>
</feature>
<feature type="modified residue" description="Phosphoserine" evidence="15">
    <location>
        <position position="482"/>
    </location>
</feature>
<feature type="modified residue" description="Phosphoserine" evidence="3">
    <location>
        <position position="495"/>
    </location>
</feature>
<feature type="modified residue" description="Phosphoserine" evidence="4">
    <location>
        <position position="518"/>
    </location>
</feature>
<feature type="modified residue" description="Omega-N-methylarginine" evidence="16">
    <location>
        <position position="534"/>
    </location>
</feature>
<feature type="modified residue" description="Phosphoserine" evidence="4">
    <location>
        <position position="606"/>
    </location>
</feature>
<feature type="sequence conflict" description="In Ref. 1; AAK97440." evidence="10" ref="1">
    <original>K</original>
    <variation>R</variation>
    <location>
        <position position="5"/>
    </location>
</feature>
<feature type="sequence conflict" description="In Ref. 1; AAK97440." evidence="10" ref="1">
    <original>N</original>
    <variation>D</variation>
    <location>
        <position position="112"/>
    </location>
</feature>
<feature type="sequence conflict" description="In Ref. 1; AAK97440." evidence="10" ref="1">
    <original>E</original>
    <variation>K</variation>
    <location>
        <position position="549"/>
    </location>
</feature>
<comment type="function">
    <text evidence="3 4">May play a role in hematopoietic cell proliferation or differentiation. Potential mediator of neuronal apoptosis (By similarity).</text>
</comment>
<comment type="catalytic activity">
    <reaction evidence="3 4">
        <text>L-seryl-[protein] + ATP = O-phospho-L-seryl-[protein] + ADP + H(+)</text>
        <dbReference type="Rhea" id="RHEA:17989"/>
        <dbReference type="Rhea" id="RHEA-COMP:9863"/>
        <dbReference type="Rhea" id="RHEA-COMP:11604"/>
        <dbReference type="ChEBI" id="CHEBI:15378"/>
        <dbReference type="ChEBI" id="CHEBI:29999"/>
        <dbReference type="ChEBI" id="CHEBI:30616"/>
        <dbReference type="ChEBI" id="CHEBI:83421"/>
        <dbReference type="ChEBI" id="CHEBI:456216"/>
        <dbReference type="EC" id="2.7.11.1"/>
    </reaction>
</comment>
<comment type="catalytic activity">
    <reaction evidence="3 4">
        <text>L-threonyl-[protein] + ATP = O-phospho-L-threonyl-[protein] + ADP + H(+)</text>
        <dbReference type="Rhea" id="RHEA:46608"/>
        <dbReference type="Rhea" id="RHEA-COMP:11060"/>
        <dbReference type="Rhea" id="RHEA-COMP:11605"/>
        <dbReference type="ChEBI" id="CHEBI:15378"/>
        <dbReference type="ChEBI" id="CHEBI:30013"/>
        <dbReference type="ChEBI" id="CHEBI:30616"/>
        <dbReference type="ChEBI" id="CHEBI:61977"/>
        <dbReference type="ChEBI" id="CHEBI:456216"/>
        <dbReference type="EC" id="2.7.11.1"/>
    </reaction>
</comment>
<comment type="cofactor">
    <cofactor evidence="3 4">
        <name>Mg(2+)</name>
        <dbReference type="ChEBI" id="CHEBI:18420"/>
    </cofactor>
</comment>
<comment type="activity regulation">
    <text evidence="1">Activated by phosphorylation on Thr-173.</text>
</comment>
<comment type="subcellular location">
    <subcellularLocation>
        <location evidence="1">Nucleus</location>
    </subcellularLocation>
</comment>
<comment type="tissue specificity">
    <text evidence="9">Ubiquitously expressed in all tissues examined.</text>
</comment>
<comment type="developmental stage">
    <text evidence="9">Expressed from day 8 dpc along the epithelium of the differentiating neural tube. Expression persists along the dorsal axis until 12.5 dpc, but becomes progressively restricted to the more caudal part of the neural tube with much stronger intensity in the caudal neuropore. Also observed in the endoderm of the primitive gut between 8.5 and 11.5 dpc, at 10.5 dpc, in the endocardium and pericardium of the developing heart, and in both the endothelium and blood cells clustered at the ventral part of the dorsal aorta. Later in development (12.5 dpc), expressed in the endocardium and the interventricular septum of the heart.</text>
</comment>
<comment type="PTM">
    <text evidence="1">Autophosphorylated. Phosphorylation on Thr-173 by STK11/LKB1 in complex with STE20-related adapter-alpha (STRADA) pseudo kinase and CAB39 (By similarity).</text>
</comment>
<comment type="similarity">
    <text evidence="10">Belongs to the protein kinase superfamily. CAMK Ser/Thr protein kinase family.</text>
</comment>
<name>SNRK_MOUSE</name>